<feature type="chain" id="PRO_0000039891" description="Genome polyprotein" evidence="1">
    <location>
        <begin position="1"/>
        <end position="2327"/>
    </location>
</feature>
<feature type="chain" id="PRO_0000039892" description="Leader protease">
    <location>
        <begin position="1"/>
        <end position="201"/>
    </location>
</feature>
<feature type="chain" id="PRO_0000374077" description="Capsid protein VP0" evidence="9">
    <location>
        <begin position="202"/>
        <end position="504"/>
    </location>
</feature>
<feature type="chain" id="PRO_0000039895" description="Capsid protein VP4" evidence="9">
    <location>
        <begin position="202"/>
        <end position="286"/>
    </location>
</feature>
<feature type="chain" id="PRO_0000039896" description="Capsid protein VP2" evidence="9">
    <location>
        <begin position="287"/>
        <end position="504"/>
    </location>
</feature>
<feature type="chain" id="PRO_0000039897" description="Capsid protein VP3" evidence="9">
    <location>
        <begin position="505"/>
        <end position="723"/>
    </location>
</feature>
<feature type="chain" id="PRO_0000039898" description="Capsid protein VP1" evidence="9">
    <location>
        <begin position="724"/>
        <end position="930"/>
    </location>
</feature>
<feature type="chain" id="PRO_0000039899" description="Protein 2A" evidence="9">
    <location>
        <begin position="931"/>
        <end position="948"/>
    </location>
</feature>
<feature type="chain" id="PRO_0000310980" description="Protein 2B" evidence="9">
    <location>
        <begin position="949"/>
        <end position="1102"/>
    </location>
</feature>
<feature type="chain" id="PRO_0000422519" description="Protein 2C" evidence="9">
    <location>
        <begin position="1103"/>
        <end position="1420"/>
    </location>
</feature>
<feature type="chain" id="PRO_0000422520" description="Protein 3A" evidence="9">
    <location>
        <begin position="1421"/>
        <end position="1573"/>
    </location>
</feature>
<feature type="chain" id="PRO_0000422521" description="Protein 3B-1" evidence="9">
    <location>
        <begin position="1574"/>
        <end position="1596"/>
    </location>
</feature>
<feature type="chain" id="PRO_0000422522" description="Protein 3B-2" evidence="9">
    <location>
        <begin position="1597"/>
        <end position="1620"/>
    </location>
</feature>
<feature type="chain" id="PRO_0000422523" description="Protein 3B-3" evidence="9">
    <location>
        <begin position="1621"/>
        <end position="1644"/>
    </location>
</feature>
<feature type="chain" id="PRO_0000422524" description="Protease 3C" evidence="9">
    <location>
        <begin position="1645"/>
        <end position="1857"/>
    </location>
</feature>
<feature type="chain" id="PRO_0000422525" description="RNA-directed RNA polymerase 3D-POL" evidence="9">
    <location>
        <begin position="1858"/>
        <end position="2327"/>
    </location>
</feature>
<feature type="topological domain" description="Cytoplasmic" evidence="9">
    <location>
        <begin position="1"/>
        <end position="1475"/>
    </location>
</feature>
<feature type="intramembrane region" evidence="9">
    <location>
        <begin position="1476"/>
        <end position="1496"/>
    </location>
</feature>
<feature type="topological domain" description="Cytoplasmic" evidence="9">
    <location>
        <begin position="1497"/>
        <end position="2327"/>
    </location>
</feature>
<feature type="domain" description="Peptidase C28">
    <location>
        <begin position="1"/>
        <end position="201"/>
    </location>
</feature>
<feature type="domain" description="SF3 helicase" evidence="11">
    <location>
        <begin position="1184"/>
        <end position="1348"/>
    </location>
</feature>
<feature type="domain" description="Peptidase C3" evidence="12">
    <location>
        <begin position="1647"/>
        <end position="1843"/>
    </location>
</feature>
<feature type="domain" description="RdRp catalytic" evidence="10">
    <location>
        <begin position="2091"/>
        <end position="2209"/>
    </location>
</feature>
<feature type="region of interest" description="Disordered" evidence="13">
    <location>
        <begin position="199"/>
        <end position="218"/>
    </location>
</feature>
<feature type="region of interest" description="Disordered" evidence="13">
    <location>
        <begin position="238"/>
        <end position="265"/>
    </location>
</feature>
<feature type="region of interest" description="Antigenic epitope" evidence="2">
    <location>
        <begin position="787"/>
        <end position="795"/>
    </location>
</feature>
<feature type="region of interest" description="Disordered" evidence="13">
    <location>
        <begin position="1524"/>
        <end position="1579"/>
    </location>
</feature>
<feature type="short sequence motif" description="Cell attachment site" evidence="4">
    <location>
        <begin position="864"/>
        <end position="866"/>
    </location>
</feature>
<feature type="short sequence motif" description="Nuclear localization signal" evidence="7">
    <location>
        <begin position="1873"/>
        <end position="1881"/>
    </location>
</feature>
<feature type="compositionally biased region" description="Polar residues" evidence="13">
    <location>
        <begin position="204"/>
        <end position="218"/>
    </location>
</feature>
<feature type="compositionally biased region" description="Polar residues" evidence="13">
    <location>
        <begin position="238"/>
        <end position="251"/>
    </location>
</feature>
<feature type="compositionally biased region" description="Low complexity" evidence="13">
    <location>
        <begin position="252"/>
        <end position="265"/>
    </location>
</feature>
<feature type="compositionally biased region" description="Basic and acidic residues" evidence="13">
    <location>
        <begin position="1524"/>
        <end position="1533"/>
    </location>
</feature>
<feature type="compositionally biased region" description="Basic and acidic residues" evidence="13">
    <location>
        <begin position="1544"/>
        <end position="1558"/>
    </location>
</feature>
<feature type="active site" description="For leader protease activity" evidence="1">
    <location>
        <position position="51"/>
    </location>
</feature>
<feature type="active site" description="For leader protease activity" evidence="1">
    <location>
        <position position="148"/>
    </location>
</feature>
<feature type="active site" description="For leader protease activity" evidence="1">
    <location>
        <position position="163"/>
    </location>
</feature>
<feature type="active site" description="For protease 3C activity; Proton donor/acceptor" evidence="12">
    <location>
        <position position="1690"/>
    </location>
</feature>
<feature type="active site" description="For protease 3C activity" evidence="12">
    <location>
        <position position="1728"/>
    </location>
</feature>
<feature type="active site" description="For protease 3C activity" evidence="12">
    <location>
        <position position="1807"/>
    </location>
</feature>
<feature type="active site" description="For RdRp activity" evidence="8">
    <location>
        <position position="2195"/>
    </location>
</feature>
<feature type="binding site" evidence="11">
    <location>
        <begin position="1212"/>
        <end position="1219"/>
    </location>
    <ligand>
        <name>ATP</name>
        <dbReference type="ChEBI" id="CHEBI:30616"/>
    </ligand>
</feature>
<feature type="site" description="Cleavage; by leader protease" evidence="9">
    <location>
        <begin position="201"/>
        <end position="202"/>
    </location>
</feature>
<feature type="site" description="Cleavage" evidence="9">
    <location>
        <begin position="286"/>
        <end position="287"/>
    </location>
</feature>
<feature type="site" description="Cleavage; by picornain 3C" evidence="9">
    <location>
        <begin position="504"/>
        <end position="505"/>
    </location>
</feature>
<feature type="site" description="Cleavage; by picornain 3C" evidence="9">
    <location>
        <begin position="723"/>
        <end position="724"/>
    </location>
</feature>
<feature type="site" description="Cleavage; by picornain 3C" evidence="9">
    <location>
        <begin position="930"/>
        <end position="931"/>
    </location>
</feature>
<feature type="site" description="Cleavage; by ribosomal skip" evidence="9">
    <location>
        <begin position="948"/>
        <end position="949"/>
    </location>
</feature>
<feature type="site" description="Cleavage; by picornain 3C" evidence="9">
    <location>
        <begin position="1102"/>
        <end position="1103"/>
    </location>
</feature>
<feature type="site" description="Cleavage; by picornain 3C" evidence="9">
    <location>
        <begin position="1420"/>
        <end position="1421"/>
    </location>
</feature>
<feature type="site" description="Cleavage; by picornain 3C" evidence="9">
    <location>
        <begin position="1573"/>
        <end position="1574"/>
    </location>
</feature>
<feature type="site" description="Cleavage; by picornain 3C" evidence="9">
    <location>
        <begin position="1596"/>
        <end position="1597"/>
    </location>
</feature>
<feature type="site" description="Cleavage; by picornain 3C" evidence="9">
    <location>
        <begin position="1620"/>
        <end position="1621"/>
    </location>
</feature>
<feature type="site" description="Cleavage; by picornain 3C" evidence="9">
    <location>
        <begin position="1644"/>
        <end position="1645"/>
    </location>
</feature>
<feature type="site" description="Cleavage; by picornain 3C" evidence="9">
    <location>
        <begin position="1857"/>
        <end position="1858"/>
    </location>
</feature>
<feature type="modified residue" description="O-(5'-phospho-RNA)-tyrosine" evidence="4">
    <location>
        <position position="1576"/>
    </location>
</feature>
<feature type="modified residue" description="O-(5'-phospho-RNA)-tyrosine" evidence="4">
    <location>
        <position position="1599"/>
    </location>
</feature>
<feature type="modified residue" description="O-(5'-phospho-RNA)-tyrosine" evidence="4">
    <location>
        <position position="1623"/>
    </location>
</feature>
<feature type="lipid moiety-binding region" description="N-myristoyl glycine; by host" evidence="7">
    <location>
        <position position="202"/>
    </location>
</feature>
<feature type="disulfide bond" description="Interchain; in VP3 dimer" evidence="4">
    <location>
        <position position="511"/>
    </location>
</feature>
<feature type="splice variant" id="VSP_018983" description="In isoform Lb." evidence="14">
    <location>
        <begin position="1"/>
        <end position="28"/>
    </location>
</feature>
<feature type="sequence variant">
    <original>I</original>
    <variation>T</variation>
    <location>
        <position position="8"/>
    </location>
</feature>
<feature type="sequence variant">
    <original>H</original>
    <variation>Q</variation>
    <location>
        <position position="48"/>
    </location>
</feature>
<feature type="sequence variant">
    <original>H</original>
    <variation>Q</variation>
    <location>
        <position position="307"/>
    </location>
</feature>
<feature type="sequence variant">
    <original>LV</original>
    <variation>QA</variation>
    <location>
        <begin position="408"/>
        <end position="409"/>
    </location>
</feature>
<feature type="sequence variant">
    <original>A</original>
    <variation>T</variation>
    <location>
        <position position="726"/>
    </location>
</feature>
<feature type="sequence variant">
    <original>A</original>
    <variation>G</variation>
    <location>
        <position position="852"/>
    </location>
</feature>
<feature type="sequence variant">
    <original>S</original>
    <variation>L</variation>
    <location>
        <position position="867"/>
    </location>
</feature>
<feature type="sequence variant">
    <original>R</original>
    <variation>G</variation>
    <location>
        <position position="876"/>
    </location>
</feature>
<feature type="strand" evidence="18">
    <location>
        <begin position="291"/>
        <end position="293"/>
    </location>
</feature>
<feature type="strand" evidence="18">
    <location>
        <begin position="302"/>
        <end position="305"/>
    </location>
</feature>
<feature type="strand" evidence="18">
    <location>
        <begin position="308"/>
        <end position="311"/>
    </location>
</feature>
<feature type="helix" evidence="18">
    <location>
        <begin position="332"/>
        <end position="334"/>
    </location>
</feature>
<feature type="turn" evidence="18">
    <location>
        <begin position="342"/>
        <end position="344"/>
    </location>
</feature>
<feature type="strand" evidence="18">
    <location>
        <begin position="348"/>
        <end position="355"/>
    </location>
</feature>
<feature type="strand" evidence="18">
    <location>
        <begin position="364"/>
        <end position="372"/>
    </location>
</feature>
<feature type="helix" evidence="18">
    <location>
        <begin position="375"/>
        <end position="383"/>
    </location>
</feature>
<feature type="strand" evidence="18">
    <location>
        <begin position="384"/>
        <end position="398"/>
    </location>
</feature>
<feature type="strand" evidence="18">
    <location>
        <begin position="404"/>
        <end position="413"/>
    </location>
</feature>
<feature type="helix" evidence="18">
    <location>
        <begin position="421"/>
        <end position="423"/>
    </location>
</feature>
<feature type="strand" evidence="18">
    <location>
        <begin position="429"/>
        <end position="434"/>
    </location>
</feature>
<feature type="turn" evidence="18">
    <location>
        <begin position="436"/>
        <end position="438"/>
    </location>
</feature>
<feature type="strand" evidence="18">
    <location>
        <begin position="440"/>
        <end position="446"/>
    </location>
</feature>
<feature type="strand" evidence="18">
    <location>
        <begin position="450"/>
        <end position="455"/>
    </location>
</feature>
<feature type="helix" evidence="18">
    <location>
        <begin position="457"/>
        <end position="459"/>
    </location>
</feature>
<feature type="strand" evidence="18">
    <location>
        <begin position="463"/>
        <end position="474"/>
    </location>
</feature>
<feature type="turn" evidence="18">
    <location>
        <begin position="476"/>
        <end position="478"/>
    </location>
</feature>
<feature type="strand" evidence="18">
    <location>
        <begin position="483"/>
        <end position="499"/>
    </location>
</feature>
<feature type="helix" evidence="18">
    <location>
        <begin position="548"/>
        <end position="554"/>
    </location>
</feature>
<feature type="strand" evidence="18">
    <location>
        <begin position="561"/>
        <end position="563"/>
    </location>
</feature>
<feature type="strand" evidence="18">
    <location>
        <begin position="571"/>
        <end position="574"/>
    </location>
</feature>
<feature type="strand" evidence="18">
    <location>
        <begin position="576"/>
        <end position="581"/>
    </location>
</feature>
<feature type="turn" evidence="18">
    <location>
        <begin position="587"/>
        <end position="591"/>
    </location>
</feature>
<feature type="helix" evidence="18">
    <location>
        <begin position="593"/>
        <end position="598"/>
    </location>
</feature>
<feature type="strand" evidence="18">
    <location>
        <begin position="601"/>
        <end position="605"/>
    </location>
</feature>
<feature type="strand" evidence="18">
    <location>
        <begin position="608"/>
        <end position="614"/>
    </location>
</feature>
<feature type="strand" evidence="18">
    <location>
        <begin position="621"/>
        <end position="629"/>
    </location>
</feature>
<feature type="strand" evidence="18">
    <location>
        <begin position="631"/>
        <end position="633"/>
    </location>
</feature>
<feature type="helix" evidence="18">
    <location>
        <begin position="639"/>
        <end position="642"/>
    </location>
</feature>
<feature type="strand" evidence="18">
    <location>
        <begin position="645"/>
        <end position="651"/>
    </location>
</feature>
<feature type="strand" evidence="18">
    <location>
        <begin position="659"/>
        <end position="662"/>
    </location>
</feature>
<feature type="strand" evidence="18">
    <location>
        <begin position="667"/>
        <end position="669"/>
    </location>
</feature>
<feature type="strand" evidence="18">
    <location>
        <begin position="671"/>
        <end position="674"/>
    </location>
</feature>
<feature type="strand" evidence="18">
    <location>
        <begin position="686"/>
        <end position="696"/>
    </location>
</feature>
<feature type="strand" evidence="18">
    <location>
        <begin position="701"/>
        <end position="708"/>
    </location>
</feature>
<feature type="strand" evidence="18">
    <location>
        <begin position="713"/>
        <end position="717"/>
    </location>
</feature>
<feature type="strand" evidence="17">
    <location>
        <begin position="863"/>
        <end position="865"/>
    </location>
</feature>
<accession>P15072</accession>
<accession>Q6PMY1</accession>
<accession>Q84755</accession>
<accession>Q84756</accession>
<accession>Q84757</accession>
<accession>Q84758</accession>
<comment type="function">
    <molecule>Leader protease</molecule>
    <text evidence="4 6">Autocatalytically cleaves itself from the polyprotein at the L/VP0 junction. Also cleaves the host translation initiation factors EIF4G1 and EIF4G3, in order to shut off the capped cellular mRNA transcription. Plays a role in counteracting host innate antiviral response using diverse mechanisms. Possesses a deubiquitinase activity acting on both 'Lys-48' and 'Lys-63'-linked polyubiquitin chains. In turn, inhibits the ubiquitination and subsequent activation of key signaling molecules of type I IFN response such as host RIGI, TBK1, TRAF3 and TRAF6. Inhibits host NF-kappa-B activity by inducing a decrease in RELA mRNA levels. Cleaves a peptide bond in the C-terminus of host ISG15, resulting in the damaging of this modifier that can no longer be attached to target proteins. Also cleaves host G3BP1 and G3BP2 in order to inhibit cytoplasmic stress granules assembly.</text>
</comment>
<comment type="function">
    <molecule>Capsid protein VP4</molecule>
    <text evidence="3">Lies on the inner surface of the capsid shell. After binding to the host receptor, the capsid undergoes conformational changes. Capsid protein VP4 is released, capsid protein VP1 N-terminus is externalized, and together, they shape a pore in the host membrane through which the viral genome is translocated into the host cell cytoplasm. After genome has been released, the channel shrinks.</text>
</comment>
<comment type="function">
    <molecule>Capsid protein VP2</molecule>
    <text evidence="4 5">Forms an icosahedral capsid of pseudo T=3 symmetry with capsid proteins VP1 and VP3. The capsid is composed of 60 copies of each capsid protein organized in the form of twelve pentamers and encloses the viral positive strand RNA genome (By similarity). Upon acidifcation in the endosome, dissociates into pentamers (By similarity).</text>
</comment>
<comment type="function">
    <molecule>Capsid protein VP3</molecule>
    <text evidence="4 5">Forms an icosahedral capsid of pseudo T=3 symmetry with capsid proteins VP0 and VP3. The capsid is composed of 60 copies of each capsid protein organized in the form of twelve pentamers and encloses the viral positive strand RNA genome (By similarity). Upon acidifcation in the endosome, dissociates into pentamers (By similarity).</text>
</comment>
<comment type="function">
    <molecule>Capsid protein VP1</molecule>
    <text evidence="4 5">Forms an icosahedral capsid of pseudo T=3 symmetry with capsid proteins VP2 and VP3. The capsid is composed of 60 copies of each capsid protein organized in the form of twelve pentamers and encloses the viral positive strand RNA genome. Mediates cell entry by attachment to an integrin receptor, usually host ITGAV/ITGB6. In addition, targets host MAVS to suppress type I IFN pathway (By similarity). Upon acidifcation in the endosome, dissociates into pentamers (By similarity).</text>
</comment>
<comment type="function">
    <molecule>Protein 2A</molecule>
    <text evidence="4">Mediates self-processing of the polyprotein by a translational effect termed 'ribosome skipping'. Mechanistically, 2A-mediated cleavage occurs between the C-terminal glycine and the proline of the downstream protein 2B. In the case of foot-and-mouth disease virus, the 2A oligopeptide is post-translationally 'trimmed' from the C-terminus of the upstream protein 1D by 3C proteinase.</text>
</comment>
<comment type="function">
    <molecule>Protein 2B</molecule>
    <text evidence="4">Plays an essential role in the virus replication cycle by acting as a viroporin. Creates a pore in the host endoplasmic reticulum and as a consequence releases Ca2+ in the cytoplasm of infected cell. In turn, high levels of cytoplasmic calcium may trigger membrane trafficking and transport of viral ER-associated proteins to viroplasms, sites of viral genome replication.</text>
</comment>
<comment type="function">
    <molecule>Protein 2C</molecule>
    <text evidence="4">Associates with and induces structural rearrangements of intracellular membranes. Triggers host autophagy by interacting with host BECN1 and thereby promotes viral replication. Participates in viral replication and interacts with host DHX9. Displays RNA-binding, nucleotide binding and NTPase activities. May play a role in virion morphogenesis and viral RNA encapsidation by interacting with the capsid protein VP3.</text>
</comment>
<comment type="function">
    <molecule>Protein 3A</molecule>
    <text evidence="4">Plays important roles in virus replication, virulence and host range. Cooperates with host DDX56 to inhibit IRF3 nuclear translocation and subsequent type I interferon production.</text>
</comment>
<comment type="function">
    <molecule>Protein 3B-1</molecule>
    <text evidence="4">Covalently linked to the 5'-end of both the positive-strand and negative-strand genomic RNAs. Acts as a genome-linked replication primer.</text>
</comment>
<comment type="function">
    <molecule>Protein 3B-2</molecule>
    <text evidence="4">Covalently linked to the 5'-end of both the positive-strand and negative-strand genomic RNAs. Acts as a genome-linked replication primer.</text>
</comment>
<comment type="function">
    <molecule>Protein 3B-3</molecule>
    <text evidence="4">Covalently linked to the 5'-end of both the positive-strand and negative-strand genomic RNAs. Acts as a genome-linked replication primer.</text>
</comment>
<comment type="function">
    <molecule>Protease 3C</molecule>
    <text evidence="4">Cysteine protease that generates mature viral proteins from the precursor polyprotein. In addition to its proteolytic activity, binds to viral RNA and thus influences viral genome replication. RNA and substrate bind cooperatively to the protease.</text>
</comment>
<comment type="function">
    <text evidence="4">RNA-directed RNA polymerase 3D-POL replicates genomic and antigenomic RNA by recognizing replications specific signals. Covalently attaches UMP to a tyrosine of VPg, which is used to prime RNA synthesis. The positive stranded RNA genome is first replicated at virus induced membranous vesicles, creating a dsRNA genomic replication form. This dsRNA is then used as template to synthesize positive stranded RNA genomes. ss(+)RNA genomes are either translated, replicated or encapsidated.</text>
</comment>
<comment type="catalytic activity">
    <molecule>Leader protease</molecule>
    <reaction>
        <text>Autocatalytically cleaves itself from the polyprotein of the foot-and-mouth disease virus by hydrolysis of a Lys-|-Gly bond, but then cleaves host cell initiation factor eIF-4G at bonds -Gly-|-Arg- and -Lys-|-Arg-.</text>
        <dbReference type="EC" id="3.4.22.46"/>
    </reaction>
</comment>
<comment type="catalytic activity">
    <molecule>Protein 2C</molecule>
    <reaction evidence="4">
        <text>a ribonucleoside 5'-triphosphate + H2O = a ribonucleoside 5'-diphosphate + phosphate + H(+)</text>
        <dbReference type="Rhea" id="RHEA:23680"/>
        <dbReference type="ChEBI" id="CHEBI:15377"/>
        <dbReference type="ChEBI" id="CHEBI:15378"/>
        <dbReference type="ChEBI" id="CHEBI:43474"/>
        <dbReference type="ChEBI" id="CHEBI:57930"/>
        <dbReference type="ChEBI" id="CHEBI:61557"/>
        <dbReference type="EC" id="3.6.1.15"/>
    </reaction>
</comment>
<comment type="catalytic activity">
    <molecule>RNA-directed RNA polymerase 3D-POL</molecule>
    <reaction evidence="10">
        <text>RNA(n) + a ribonucleoside 5'-triphosphate = RNA(n+1) + diphosphate</text>
        <dbReference type="Rhea" id="RHEA:21248"/>
        <dbReference type="Rhea" id="RHEA-COMP:14527"/>
        <dbReference type="Rhea" id="RHEA-COMP:17342"/>
        <dbReference type="ChEBI" id="CHEBI:33019"/>
        <dbReference type="ChEBI" id="CHEBI:61557"/>
        <dbReference type="ChEBI" id="CHEBI:140395"/>
        <dbReference type="EC" id="2.7.7.48"/>
    </reaction>
</comment>
<comment type="catalytic activity">
    <molecule>Protease 3C</molecule>
    <reaction evidence="12">
        <text>Selective cleavage of Gln-|-Gly bond in the poliovirus polyprotein. In other picornavirus reactions Glu may be substituted for Gln, and Ser or Thr for Gly.</text>
        <dbReference type="EC" id="3.4.22.28"/>
    </reaction>
</comment>
<comment type="subunit">
    <molecule>Leader protease</molecule>
    <text evidence="4">Interacts with host ISG15.</text>
</comment>
<comment type="subunit">
    <molecule>Capsid protein VP1</molecule>
    <text evidence="4">Interacts (via R-G-D motif) with host ITGAV/ITGB6 (By similarity). Interacts with host MAVS; this interaction inhibits binding of host TRAF3 to MAVS, thereby suppressing interferon-mediated responses (By similarity).</text>
</comment>
<comment type="subunit">
    <molecule>Protein 2B</molecule>
    <text evidence="4">Forms homooligomers.</text>
</comment>
<comment type="subunit">
    <molecule>Protein 2C</molecule>
    <text evidence="4">Homohexamer. Interacts with host VIM. Interacts with host BECN1.</text>
</comment>
<comment type="subunit">
    <molecule>Protein 3A</molecule>
    <text evidence="4">Interacts with host DCTN3.</text>
</comment>
<comment type="subunit">
    <molecule>Protein 3B-1</molecule>
    <text evidence="7">Interacts with RNA-dependent RNA polymerase; this interaction allows 3B-1 to binds 2 polymerases and act as a primer. It also allows the recruitment of the RNA-dependent RNA polymerase to host membranes.</text>
</comment>
<comment type="subunit">
    <molecule>Protein 3B-2</molecule>
    <text evidence="7">Interacts with RNA-dependent RNA polymerase; this interaction allows 3B-2 to act as a primer.</text>
</comment>
<comment type="subunit">
    <molecule>Protein 3B-3</molecule>
    <text evidence="7">Interacts with RNA-dependent RNA polymerase; this interaction allows 3B-3 to act as a primer.</text>
</comment>
<comment type="subunit">
    <molecule>RNA-directed RNA polymerase 3D-POL</molecule>
    <text evidence="7">Interacts with 3B-1; this interaction allows 3B-1 to binds 2 polymerases and act as a primer. It also allows the recruitment of the RNA-dependent RNA polymerase to host membranes (By similarity). Interacts with 3B-2; this interaction allows 3B-2 to act as a primer (By similarity). Interacts with 3B-3; this interaction allows 3B-3 to act as a primer (By similarity).</text>
</comment>
<comment type="subcellular location">
    <molecule>Leader protease</molecule>
    <subcellularLocation>
        <location evidence="4">Host nucleus</location>
    </subcellularLocation>
    <subcellularLocation>
        <location evidence="4">Host cytoplasm</location>
    </subcellularLocation>
</comment>
<comment type="subcellular location">
    <molecule>Capsid protein VP2</molecule>
    <subcellularLocation>
        <location evidence="4">Virion</location>
    </subcellularLocation>
    <subcellularLocation>
        <location evidence="14">Host cytoplasm</location>
    </subcellularLocation>
</comment>
<comment type="subcellular location">
    <molecule>Capsid protein VP3</molecule>
    <subcellularLocation>
        <location evidence="4">Virion</location>
    </subcellularLocation>
    <subcellularLocation>
        <location evidence="14">Host cytoplasm</location>
    </subcellularLocation>
</comment>
<comment type="subcellular location">
    <molecule>Capsid protein VP1</molecule>
    <subcellularLocation>
        <location evidence="4">Virion</location>
    </subcellularLocation>
    <subcellularLocation>
        <location evidence="14">Host cytoplasm</location>
    </subcellularLocation>
</comment>
<comment type="subcellular location">
    <molecule>Protein 2B</molecule>
    <subcellularLocation>
        <location evidence="4">Host endoplasmic reticulum membrane</location>
    </subcellularLocation>
</comment>
<comment type="subcellular location">
    <molecule>Protein 2C</molecule>
    <subcellularLocation>
        <location evidence="14">Host cytoplasmic vesicle membrane</location>
        <topology evidence="14">Peripheral membrane protein</topology>
        <orientation evidence="14">Cytoplasmic side</orientation>
    </subcellularLocation>
    <text evidence="1">Probably localizes to the surface of intracellular membrane vesicles that are induced after virus infection as the site for viral RNA replication. These vesicles are derived from the endoplasmic reticulum (By similarity).</text>
</comment>
<comment type="subcellular location">
    <molecule>Protein 3A</molecule>
    <subcellularLocation>
        <location evidence="14">Host cytoplasmic vesicle membrane</location>
        <topology evidence="14">Peripheral membrane protein</topology>
        <orientation evidence="14">Cytoplasmic side</orientation>
    </subcellularLocation>
    <text evidence="1">Probably localizes to the surface of intracellular membrane vesicles that are induced after virus infection as the site for viral RNA replication. These vesicles are derived from the endoplasmic reticulum (By similarity).</text>
</comment>
<comment type="subcellular location">
    <molecule>Protein 3B-1</molecule>
    <subcellularLocation>
        <location evidence="14">Virion</location>
    </subcellularLocation>
</comment>
<comment type="subcellular location">
    <molecule>Protein 3B-2</molecule>
    <subcellularLocation>
        <location evidence="14">Virion</location>
    </subcellularLocation>
</comment>
<comment type="subcellular location">
    <molecule>Protein 3B-3</molecule>
    <subcellularLocation>
        <location evidence="14">Virion</location>
    </subcellularLocation>
</comment>
<comment type="subcellular location">
    <molecule>Protease 3C</molecule>
    <subcellularLocation>
        <location evidence="14">Host cytoplasm</location>
    </subcellularLocation>
</comment>
<comment type="subcellular location">
    <molecule>RNA-directed RNA polymerase 3D-POL</molecule>
    <subcellularLocation>
        <location evidence="14">Host cytoplasmic vesicle membrane</location>
        <topology evidence="14">Peripheral membrane protein</topology>
        <orientation evidence="14">Cytoplasmic side</orientation>
    </subcellularLocation>
    <text evidence="1">Probably localizes to the surface of intracellular membrane vesicles that are induced after virus infection as the site for viral RNA replication. These vesicles are derived from the endoplasmic reticulum (By similarity).</text>
</comment>
<comment type="alternative products">
    <event type="alternative initiation"/>
    <isoform>
        <id>P15072-1</id>
        <name>Lab</name>
        <sequence type="displayed"/>
    </isoform>
    <isoform>
        <id>P15072-2</id>
        <name>Lb</name>
        <sequence type="described" ref="VSP_018983"/>
    </isoform>
</comment>
<comment type="PTM">
    <molecule>Leader protease</molecule>
    <text evidence="4">Removes six residues from its own C-terminus, generating sLb(pro).</text>
</comment>
<comment type="PTM">
    <molecule>Genome polyprotein</molecule>
    <text evidence="4">Specific enzymatic cleavages in vivo by the viral proteases yield a variety of precursors and mature proteins. The polyprotein seems to be cotranslationally cleaved at the 2A/2B junction by a ribosomal skip from one codon to the next without formation of a peptide bond. This process would release the L-P1-2A peptide from the translational complex.</text>
</comment>
<comment type="PTM">
    <molecule>Capsid protein VP0</molecule>
    <text evidence="4">During virion maturation, immature virions are rendered infectious following cleavage of VP0 into VP4 and VP2. This maturation seems to be an autocatalytic event triggered by the presence of RNA in the capsid and is followed by a conformational change of the particle.</text>
</comment>
<comment type="PTM">
    <molecule>Capsid protein VP4</molecule>
    <text evidence="7">Myristoylation is required during RNA encapsidation and formation of the mature virus particle.</text>
</comment>
<comment type="PTM">
    <molecule>Protein 3B-1</molecule>
    <text evidence="4">Uridylylated by the polymerase and covalently linked to the 5'-end of genomic RNA. These uridylylated forms act as a nucleotide-peptide primer for the polymerase.</text>
</comment>
<comment type="PTM">
    <molecule>Protein 3B-2</molecule>
    <text evidence="4">Uridylylated by the polymerase and covalently linked to the 5'-end of genomic RNA. These uridylylated forms act as a nucleotide-peptide primer for the polymerase.</text>
</comment>
<comment type="PTM">
    <molecule>Protein 3B-3</molecule>
    <text evidence="4">Uridylylated by the polymerase and covalently linked to the 5'-end of genomic RNA. These uridylylated forms act as a nucleotide-peptide primer for the polymerase.</text>
</comment>
<comment type="miscellaneous">
    <molecule>Capsid protein VP1</molecule>
    <text evidence="14">Contains the main antigenic determinants of the virion; therefore, changes in its sequence must be responsible for the high antigenic variability of the virus.</text>
</comment>
<comment type="miscellaneous">
    <text>The capsid protein VP1 contains the main antigenic determinants of the virion; therefore, changes in its sequence must be responsible for the high antigenic variability of the virus.</text>
</comment>
<comment type="similarity">
    <text evidence="14">Belongs to the picornaviruses polyprotein family.</text>
</comment>
<comment type="online information" name="Virus Particle ExploreR db">
    <link uri="https://viperdb.org/Info_Page.php?VDB=1fmd"/>
    <text>Icosahedral capsid structure</text>
</comment>
<comment type="online information" name="Virus Particle ExploreR db">
    <link uri="https://viperdb.org/Info_Page.php?VDB=1qgc"/>
    <text>Icosahedral capsid structure in complex with a fab fragment of a neutralizing antibody</text>
</comment>
<organismHost>
    <name type="scientific">Bos taurus</name>
    <name type="common">Bovine</name>
    <dbReference type="NCBI Taxonomy" id="9913"/>
</organismHost>
<organismHost>
    <name type="scientific">Capra hircus</name>
    <name type="common">Goat</name>
    <dbReference type="NCBI Taxonomy" id="9925"/>
</organismHost>
<organismHost>
    <name type="scientific">Cervidae</name>
    <name type="common">Deer</name>
    <dbReference type="NCBI Taxonomy" id="9850"/>
</organismHost>
<organismHost>
    <name type="scientific">Erinaceidae</name>
    <name type="common">hedgehogs</name>
    <dbReference type="NCBI Taxonomy" id="9363"/>
</organismHost>
<organismHost>
    <name type="scientific">Loxodonta africana</name>
    <name type="common">African elephant</name>
    <dbReference type="NCBI Taxonomy" id="9785"/>
</organismHost>
<organismHost>
    <name type="scientific">Ovis aries</name>
    <name type="common">Sheep</name>
    <dbReference type="NCBI Taxonomy" id="9940"/>
</organismHost>
<organismHost>
    <name type="scientific">Rattus norvegicus</name>
    <name type="common">Rat</name>
    <dbReference type="NCBI Taxonomy" id="10116"/>
</organismHost>
<organismHost>
    <name type="scientific">Sus scrofa</name>
    <name type="common">Pig</name>
    <dbReference type="NCBI Taxonomy" id="9823"/>
</organismHost>
<name>POLG_FMDVT</name>
<keyword id="KW-0002">3D-structure</keyword>
<keyword id="KW-0024">Alternative initiation</keyword>
<keyword id="KW-0067">ATP-binding</keyword>
<keyword id="KW-0167">Capsid protein</keyword>
<keyword id="KW-1167">Clathrin- and caveolin-independent endocytosis of virus by host</keyword>
<keyword id="KW-1165">Clathrin-mediated endocytosis of virus by host</keyword>
<keyword id="KW-0191">Covalent protein-RNA linkage</keyword>
<keyword id="KW-1015">Disulfide bond</keyword>
<keyword id="KW-0347">Helicase</keyword>
<keyword id="KW-1035">Host cytoplasm</keyword>
<keyword id="KW-1036">Host cytoplasmic vesicle</keyword>
<keyword id="KW-1038">Host endoplasmic reticulum</keyword>
<keyword id="KW-1043">Host membrane</keyword>
<keyword id="KW-1048">Host nucleus</keyword>
<keyword id="KW-0945">Host-virus interaction</keyword>
<keyword id="KW-0378">Hydrolase</keyword>
<keyword id="KW-0407">Ion channel</keyword>
<keyword id="KW-0406">Ion transport</keyword>
<keyword id="KW-0449">Lipoprotein</keyword>
<keyword id="KW-0472">Membrane</keyword>
<keyword id="KW-1122">Modulation of host chromatin by virus</keyword>
<keyword id="KW-0519">Myristate</keyword>
<keyword id="KW-0547">Nucleotide-binding</keyword>
<keyword id="KW-0548">Nucleotidyltransferase</keyword>
<keyword id="KW-0597">Phosphoprotein</keyword>
<keyword id="KW-0645">Protease</keyword>
<keyword id="KW-0694">RNA-binding</keyword>
<keyword id="KW-0696">RNA-directed RNA polymerase</keyword>
<keyword id="KW-1143">T=pseudo3 icosahedral capsid protein</keyword>
<keyword id="KW-0788">Thiol protease</keyword>
<keyword id="KW-0808">Transferase</keyword>
<keyword id="KW-0810">Translation regulation</keyword>
<keyword id="KW-0813">Transport</keyword>
<keyword id="KW-1161">Viral attachment to host cell</keyword>
<keyword id="KW-1182">Viral ion channel</keyword>
<keyword id="KW-1162">Viral penetration into host cytoplasm</keyword>
<keyword id="KW-0693">Viral RNA replication</keyword>
<keyword id="KW-0946">Virion</keyword>
<keyword id="KW-1164">Virus endocytosis by host</keyword>
<keyword id="KW-1160">Virus entry into host cell</keyword>
<sequence length="2327" mass="258119">MNTTDCFIAVVNAIREIRALFLPRTTGKMEFTLHDGEKKVFYSRPNNHDNCWLNTILQLFRYVDEPFFDWVYNSPENLTLEAIKQLEELTGLELREGGPPALVIWNIKHLLHTGIGTASRPSEVCMVDGTDMCLADFHAGIFMKGQEHAVFACVTSNGWYAIDDEDFYPWTPDPSDVLVFVPYDQEPLNEGWKANVQRKLKGAGQSSPATGSQNQSGNTGSIINNYYMQQYQNSMDTQLGDNAISGGSNEGSTDTTSTHTTNTQNNDWFSKLASSAFSGLFGALLADKKTEETTLLEDRILTTRNGHTTSTTQSSVGVTFGYATAEDSTSGPNTSGLETRVHQAERFFKMALFDWVPSQNFGHMHKVVLPHEPKGVYGGLVKSYAYMRNGWDVEVTAVGNQFNGGCLLVALVPEMGDISDREKYQLTLYPHQFINPRTNMTAHITVPYVGVNRYDQYKQHRPWTLVVMVVAPLTTNTAGAQQIKVYANIAPTNVHVAGELPSKEGIFPVACSDGYGNMVTTDPKTADPAYGKVYNPPRTALPGRFTNYLDVAEACPTFLMFENVPYVSTRTDGQRLLAKFDVSLAAKHMSNTYLAGLAQYYTQYTGTINLHFMFTGPTDAKARYMVAYVPPGMDAPDNPEEAAHCIHAEWDTGLNSKFTFSIPYISAADYAYTASHEAETTCVQGWVCVYQITHGKADADALVVSASAGKDFELRLPVDARQQTTATGESADPVTTTVENYGGETQVQRRHHTDVAFVLDRFVKVTVSGNQHTLDVMQAHKDNIVGALLRAATYYFSDLEIAVTHTGKLTWVPNGAPVSALDNTTNPTAYHKGPLTRLALPYTAPHRVLATAYTGTTTYTASTRGDSAHLTATRARHLPTSFNFGAVKAETITELLVRMKRAELYCPRPILPIQPTGDRHKQPLVAPAKQLLNFDLLKLAGDVESNPGPFFFSDVRSNFSKLVETINQMQEDMSTKHGPDFNRLVSAFEELASGVKAIRTGLDEAKPWYKLIKLLSRLSCMAAVAARSKDPVLVAIMLADTGLEILDSTFVVKKISDSLSSLFHVPAPAFSFGAPILLAGLVKVASSFFRSTPEDLERAEKQLKARDINDIFAILKNGEWLVKLILAIRDWIKAWIASEEKFVTMTDLVPGILEKQRDLNDPSKYKDAKEWLDNTRQACLKSGNVHIANLCKVVAPAPSKSRPEPVVVCLRGKSGQGKSFLANVLAQAISTHLTGRTDSVWYCPPDPDHFDGYNQQTVVVMDDLGQNPDGKDFKYFAQMVSTTGFIPPMASLEDKGKPFSSKVIIATTNLYSGFTPKTMVCPDALNRRFHFDIDVSAKDGYKINNKLDIIKALEDTHTNPVAMFQYDCALLNGMAVEMKRLQQDMFKPQPPLQNVYQLVQEVIERVELHEKVSSHPIFKQISIPSQKSVLYFLIEKGQHEAAIEFFEGMVHDSIKEELRPLIQQTSFVKRAFKRLKENFEIVALCLTLLANIVIMIRETHKRQKMVDDAVNEYIEKANITTDDKTLDEAEKNPLETSGASTVGFRERTLPGQKARDDVNSEPAQPTEEQPQAEGPYAGPLERQRPLKVRAKLPQQEGPYAGPMERQKPLKVKARAPVVKEGPYEGPVKKPVALKVKAKNLIVTESGAPPTDLQKMVMGNTKPVELILDGKTVAICCATGVFGTAYLVPRHLFAEKYDKIMLDGRALTDSDYRVFEFEIKVKGQDMLSDAALMVLHRGNRVRDITKHFRDVARMKKGTPVVGVINNADVGRLIFSGEALTYKDIVVCMDGDTMPGLFAYKAATKAGYCGGAVLAKDGADTFIVGTHSAGGNGVGYCSCVSRSMLLKMKAHIDPEPHHEGLIVDTRDVEERVHVMRKTKLAPTVAHGVFNPEFGPAALSNKDPRLNEGVVLDEVIFSKHKGDTKMSEEDKALFRRCAADYASRLHSVLGTANAPLSIYEAIKGVDGLDAMEPDTAPGLPWALQGKRRGALIDFENGTVGPEVEAALKLMEKREYKFACQTFLKDEIRPMEKVRAGKTRIVDVLPVEHILYTRMMIGRFCAQMHSNNGPQIGSAVGCNPDVDWQRFGTHFAQYRNVWDVDYSAFDANHCSDAMNIMFEEVFRTEFGFHPNAEWILKTLVNTEHAYENKRITVEGGMPSGCSATSIINTILNNIYVLYALRRHYEGVELDTYTMISYGDDIVVASDYDLDFEALKPHFKSLGQTITPADKSDKGFVLGHSITDVTFLKRHFHMDYGTGFYKPVMASKTLEAILSFARRGTIQEKLISVAGLAVHSGPDEYRRLFEPFQGLFEIPSYRSLYLRWVNAVCGDA</sequence>
<organism>
    <name type="scientific">Foot-and-mouth disease virus (isolate -/Germany/C1Oberbayen/1960 serotype C)</name>
    <name type="common">FMDV</name>
    <dbReference type="NCBI Taxonomy" id="12121"/>
    <lineage>
        <taxon>Viruses</taxon>
        <taxon>Riboviria</taxon>
        <taxon>Orthornavirae</taxon>
        <taxon>Pisuviricota</taxon>
        <taxon>Pisoniviricetes</taxon>
        <taxon>Picornavirales</taxon>
        <taxon>Picornaviridae</taxon>
        <taxon>Caphthovirinae</taxon>
        <taxon>Aphthovirus</taxon>
        <taxon>Foot-and-mouth disease virus</taxon>
    </lineage>
</organism>
<evidence type="ECO:0000250" key="1"/>
<evidence type="ECO:0000250" key="2">
    <source>
        <dbReference type="UniProtKB" id="A2I7M2"/>
    </source>
</evidence>
<evidence type="ECO:0000250" key="3">
    <source>
        <dbReference type="UniProtKB" id="P03300"/>
    </source>
</evidence>
<evidence type="ECO:0000250" key="4">
    <source>
        <dbReference type="UniProtKB" id="P03305"/>
    </source>
</evidence>
<evidence type="ECO:0000250" key="5">
    <source>
        <dbReference type="UniProtKB" id="P03306"/>
    </source>
</evidence>
<evidence type="ECO:0000250" key="6">
    <source>
        <dbReference type="UniProtKB" id="P03308"/>
    </source>
</evidence>
<evidence type="ECO:0000250" key="7">
    <source>
        <dbReference type="UniProtKB" id="P03311"/>
    </source>
</evidence>
<evidence type="ECO:0000250" key="8">
    <source>
        <dbReference type="UniProtKB" id="P12296"/>
    </source>
</evidence>
<evidence type="ECO:0000255" key="9"/>
<evidence type="ECO:0000255" key="10">
    <source>
        <dbReference type="PROSITE-ProRule" id="PRU00539"/>
    </source>
</evidence>
<evidence type="ECO:0000255" key="11">
    <source>
        <dbReference type="PROSITE-ProRule" id="PRU00551"/>
    </source>
</evidence>
<evidence type="ECO:0000255" key="12">
    <source>
        <dbReference type="PROSITE-ProRule" id="PRU01222"/>
    </source>
</evidence>
<evidence type="ECO:0000256" key="13">
    <source>
        <dbReference type="SAM" id="MobiDB-lite"/>
    </source>
</evidence>
<evidence type="ECO:0000305" key="14"/>
<evidence type="ECO:0007744" key="15">
    <source>
        <dbReference type="PDB" id="1EJO"/>
    </source>
</evidence>
<evidence type="ECO:0007744" key="16">
    <source>
        <dbReference type="PDB" id="1FMD"/>
    </source>
</evidence>
<evidence type="ECO:0007829" key="17">
    <source>
        <dbReference type="PDB" id="1EJO"/>
    </source>
</evidence>
<evidence type="ECO:0007829" key="18">
    <source>
        <dbReference type="PDB" id="1FMD"/>
    </source>
</evidence>
<dbReference type="EC" id="3.4.22.46" evidence="4"/>
<dbReference type="EC" id="3.6.1.15" evidence="4"/>
<dbReference type="EC" id="3.4.22.28"/>
<dbReference type="EC" id="2.7.7.48" evidence="4"/>
<dbReference type="EMBL" id="AY593805">
    <property type="protein sequence ID" value="AAT01748.1"/>
    <property type="molecule type" value="Genomic_RNA"/>
</dbReference>
<dbReference type="EMBL" id="X00130">
    <property type="protein sequence ID" value="CAA24960.2"/>
    <property type="molecule type" value="Genomic_RNA"/>
</dbReference>
<dbReference type="PIR" id="A20288">
    <property type="entry name" value="GNNYC1"/>
</dbReference>
<dbReference type="PDB" id="1EJO">
    <property type="method" value="X-ray"/>
    <property type="resolution" value="2.30 A"/>
    <property type="chains" value="P=859-873"/>
</dbReference>
<dbReference type="PDB" id="1FMD">
    <property type="method" value="X-ray"/>
    <property type="resolution" value="3.50 A"/>
    <property type="chains" value="2=287-504, 3=505-723"/>
</dbReference>
<dbReference type="PDB" id="1QGC">
    <property type="method" value="EM"/>
    <property type="resolution" value="30.00 A"/>
    <property type="chains" value="2=287-504, 3=505-723"/>
</dbReference>
<dbReference type="PDBsum" id="1EJO"/>
<dbReference type="PDBsum" id="1FMD"/>
<dbReference type="PDBsum" id="1QGC"/>
<dbReference type="SMR" id="P15072"/>
<dbReference type="MEROPS" id="C03.008"/>
<dbReference type="MEROPS" id="C28.001"/>
<dbReference type="ABCD" id="P15072">
    <property type="antibodies" value="1 sequenced antibody"/>
</dbReference>
<dbReference type="EvolutionaryTrace" id="P15072"/>
<dbReference type="Proteomes" id="UP000012671">
    <property type="component" value="Genome"/>
</dbReference>
<dbReference type="GO" id="GO:0044162">
    <property type="term" value="C:host cell cytoplasmic vesicle membrane"/>
    <property type="evidence" value="ECO:0007669"/>
    <property type="project" value="UniProtKB-SubCell"/>
</dbReference>
<dbReference type="GO" id="GO:0044167">
    <property type="term" value="C:host cell endoplasmic reticulum membrane"/>
    <property type="evidence" value="ECO:0007669"/>
    <property type="project" value="UniProtKB-SubCell"/>
</dbReference>
<dbReference type="GO" id="GO:0042025">
    <property type="term" value="C:host cell nucleus"/>
    <property type="evidence" value="ECO:0007669"/>
    <property type="project" value="UniProtKB-SubCell"/>
</dbReference>
<dbReference type="GO" id="GO:0016020">
    <property type="term" value="C:membrane"/>
    <property type="evidence" value="ECO:0007669"/>
    <property type="project" value="UniProtKB-KW"/>
</dbReference>
<dbReference type="GO" id="GO:0039618">
    <property type="term" value="C:T=pseudo3 icosahedral viral capsid"/>
    <property type="evidence" value="ECO:0007669"/>
    <property type="project" value="UniProtKB-KW"/>
</dbReference>
<dbReference type="GO" id="GO:0005524">
    <property type="term" value="F:ATP binding"/>
    <property type="evidence" value="ECO:0007669"/>
    <property type="project" value="UniProtKB-KW"/>
</dbReference>
<dbReference type="GO" id="GO:0015267">
    <property type="term" value="F:channel activity"/>
    <property type="evidence" value="ECO:0007669"/>
    <property type="project" value="UniProtKB-KW"/>
</dbReference>
<dbReference type="GO" id="GO:0004197">
    <property type="term" value="F:cysteine-type endopeptidase activity"/>
    <property type="evidence" value="ECO:0007669"/>
    <property type="project" value="UniProtKB-EC"/>
</dbReference>
<dbReference type="GO" id="GO:0017111">
    <property type="term" value="F:ribonucleoside triphosphate phosphatase activity"/>
    <property type="evidence" value="ECO:0007669"/>
    <property type="project" value="UniProtKB-EC"/>
</dbReference>
<dbReference type="GO" id="GO:0003723">
    <property type="term" value="F:RNA binding"/>
    <property type="evidence" value="ECO:0007669"/>
    <property type="project" value="UniProtKB-KW"/>
</dbReference>
<dbReference type="GO" id="GO:0003724">
    <property type="term" value="F:RNA helicase activity"/>
    <property type="evidence" value="ECO:0007669"/>
    <property type="project" value="InterPro"/>
</dbReference>
<dbReference type="GO" id="GO:0003968">
    <property type="term" value="F:RNA-directed RNA polymerase activity"/>
    <property type="evidence" value="ECO:0007669"/>
    <property type="project" value="UniProtKB-KW"/>
</dbReference>
<dbReference type="GO" id="GO:0005198">
    <property type="term" value="F:structural molecule activity"/>
    <property type="evidence" value="ECO:0007669"/>
    <property type="project" value="InterPro"/>
</dbReference>
<dbReference type="GO" id="GO:0075512">
    <property type="term" value="P:clathrin-dependent endocytosis of virus by host cell"/>
    <property type="evidence" value="ECO:0007669"/>
    <property type="project" value="UniProtKB-KW"/>
</dbReference>
<dbReference type="GO" id="GO:0006351">
    <property type="term" value="P:DNA-templated transcription"/>
    <property type="evidence" value="ECO:0007669"/>
    <property type="project" value="InterPro"/>
</dbReference>
<dbReference type="GO" id="GO:0034220">
    <property type="term" value="P:monoatomic ion transmembrane transport"/>
    <property type="evidence" value="ECO:0007669"/>
    <property type="project" value="UniProtKB-KW"/>
</dbReference>
<dbReference type="GO" id="GO:0006508">
    <property type="term" value="P:proteolysis"/>
    <property type="evidence" value="ECO:0007669"/>
    <property type="project" value="UniProtKB-KW"/>
</dbReference>
<dbReference type="GO" id="GO:0006417">
    <property type="term" value="P:regulation of translation"/>
    <property type="evidence" value="ECO:0007669"/>
    <property type="project" value="UniProtKB-KW"/>
</dbReference>
<dbReference type="GO" id="GO:0039520">
    <property type="term" value="P:symbiont-mediated activation of host autophagy"/>
    <property type="evidence" value="ECO:0000250"/>
    <property type="project" value="UniProtKB"/>
</dbReference>
<dbReference type="GO" id="GO:0039525">
    <property type="term" value="P:symbiont-mediated perturbation of host chromatin organization"/>
    <property type="evidence" value="ECO:0007669"/>
    <property type="project" value="UniProtKB-KW"/>
</dbReference>
<dbReference type="GO" id="GO:0019082">
    <property type="term" value="P:viral protein processing"/>
    <property type="evidence" value="ECO:0007669"/>
    <property type="project" value="InterPro"/>
</dbReference>
<dbReference type="GO" id="GO:0039694">
    <property type="term" value="P:viral RNA genome replication"/>
    <property type="evidence" value="ECO:0007669"/>
    <property type="project" value="InterPro"/>
</dbReference>
<dbReference type="GO" id="GO:0019062">
    <property type="term" value="P:virion attachment to host cell"/>
    <property type="evidence" value="ECO:0007669"/>
    <property type="project" value="UniProtKB-KW"/>
</dbReference>
<dbReference type="CDD" id="cd23210">
    <property type="entry name" value="Aphthovirus_RdRp"/>
    <property type="match status" value="1"/>
</dbReference>
<dbReference type="CDD" id="cd00205">
    <property type="entry name" value="rhv_like"/>
    <property type="match status" value="3"/>
</dbReference>
<dbReference type="FunFam" id="1.20.960.20:FF:000002">
    <property type="entry name" value="Genome polyprotein"/>
    <property type="match status" value="1"/>
</dbReference>
<dbReference type="FunFam" id="2.40.10.10:FF:000108">
    <property type="entry name" value="Genome polyprotein"/>
    <property type="match status" value="1"/>
</dbReference>
<dbReference type="FunFam" id="2.60.120.20:FF:000005">
    <property type="entry name" value="Genome polyprotein"/>
    <property type="match status" value="1"/>
</dbReference>
<dbReference type="FunFam" id="2.60.120.20:FF:000006">
    <property type="entry name" value="Genome polyprotein"/>
    <property type="match status" value="1"/>
</dbReference>
<dbReference type="FunFam" id="3.30.70.270:FF:000031">
    <property type="entry name" value="Genome polyprotein"/>
    <property type="match status" value="1"/>
</dbReference>
<dbReference type="Gene3D" id="1.20.960.20">
    <property type="match status" value="1"/>
</dbReference>
<dbReference type="Gene3D" id="2.60.120.20">
    <property type="match status" value="3"/>
</dbReference>
<dbReference type="Gene3D" id="3.30.70.270">
    <property type="match status" value="2"/>
</dbReference>
<dbReference type="Gene3D" id="4.10.90.10">
    <property type="entry name" value="Capsid protein VP4 superfamily, Picornavirus"/>
    <property type="match status" value="1"/>
</dbReference>
<dbReference type="Gene3D" id="3.90.70.10">
    <property type="entry name" value="Cysteine proteinases"/>
    <property type="match status" value="1"/>
</dbReference>
<dbReference type="Gene3D" id="2.40.10.10">
    <property type="entry name" value="Trypsin-like serine proteases"/>
    <property type="match status" value="2"/>
</dbReference>
<dbReference type="InterPro" id="IPR015031">
    <property type="entry name" value="Capsid_VP4_Picornavir"/>
</dbReference>
<dbReference type="InterPro" id="IPR037080">
    <property type="entry name" value="Capsid_VP4_sf_Picornavirus"/>
</dbReference>
<dbReference type="InterPro" id="IPR043502">
    <property type="entry name" value="DNA/RNA_pol_sf"/>
</dbReference>
<dbReference type="InterPro" id="IPR004080">
    <property type="entry name" value="FMDV_VP1_coat"/>
</dbReference>
<dbReference type="InterPro" id="IPR004004">
    <property type="entry name" value="Helic/Pol/Pept_Calicivir-typ"/>
</dbReference>
<dbReference type="InterPro" id="IPR000605">
    <property type="entry name" value="Helicase_SF3_ssDNA/RNA_vir"/>
</dbReference>
<dbReference type="InterPro" id="IPR014759">
    <property type="entry name" value="Helicase_SF3_ssRNA_vir"/>
</dbReference>
<dbReference type="InterPro" id="IPR027417">
    <property type="entry name" value="P-loop_NTPase"/>
</dbReference>
<dbReference type="InterPro" id="IPR038765">
    <property type="entry name" value="Papain-like_cys_pep_sf"/>
</dbReference>
<dbReference type="InterPro" id="IPR044067">
    <property type="entry name" value="PCV_3C_PRO"/>
</dbReference>
<dbReference type="InterPro" id="IPR008739">
    <property type="entry name" value="Peptidase_C28"/>
</dbReference>
<dbReference type="InterPro" id="IPR000199">
    <property type="entry name" value="Peptidase_C3A/C3B_picornavir"/>
</dbReference>
<dbReference type="InterPro" id="IPR009003">
    <property type="entry name" value="Peptidase_S1_PA"/>
</dbReference>
<dbReference type="InterPro" id="IPR043504">
    <property type="entry name" value="Peptidase_S1_PA_chymotrypsin"/>
</dbReference>
<dbReference type="InterPro" id="IPR001676">
    <property type="entry name" value="Picornavirus_capsid"/>
</dbReference>
<dbReference type="InterPro" id="IPR043128">
    <property type="entry name" value="Rev_trsase/Diguanyl_cyclase"/>
</dbReference>
<dbReference type="InterPro" id="IPR033703">
    <property type="entry name" value="Rhv-like"/>
</dbReference>
<dbReference type="InterPro" id="IPR001205">
    <property type="entry name" value="RNA-dir_pol_C"/>
</dbReference>
<dbReference type="InterPro" id="IPR007094">
    <property type="entry name" value="RNA-dir_pol_PSvirus"/>
</dbReference>
<dbReference type="InterPro" id="IPR029053">
    <property type="entry name" value="Viral_coat"/>
</dbReference>
<dbReference type="Pfam" id="PF05408">
    <property type="entry name" value="Peptidase_C28"/>
    <property type="match status" value="1"/>
</dbReference>
<dbReference type="Pfam" id="PF00548">
    <property type="entry name" value="Peptidase_C3"/>
    <property type="match status" value="1"/>
</dbReference>
<dbReference type="Pfam" id="PF00680">
    <property type="entry name" value="RdRP_1"/>
    <property type="match status" value="1"/>
</dbReference>
<dbReference type="Pfam" id="PF00073">
    <property type="entry name" value="Rhv"/>
    <property type="match status" value="2"/>
</dbReference>
<dbReference type="Pfam" id="PF22663">
    <property type="entry name" value="Rhv_5"/>
    <property type="match status" value="1"/>
</dbReference>
<dbReference type="Pfam" id="PF00910">
    <property type="entry name" value="RNA_helicase"/>
    <property type="match status" value="1"/>
</dbReference>
<dbReference type="Pfam" id="PF08935">
    <property type="entry name" value="VP4_2"/>
    <property type="match status" value="1"/>
</dbReference>
<dbReference type="PRINTS" id="PR00918">
    <property type="entry name" value="CALICVIRUSNS"/>
</dbReference>
<dbReference type="PRINTS" id="PR01542">
    <property type="entry name" value="FMDVP1COAT"/>
</dbReference>
<dbReference type="SUPFAM" id="SSF54001">
    <property type="entry name" value="Cysteine proteinases"/>
    <property type="match status" value="1"/>
</dbReference>
<dbReference type="SUPFAM" id="SSF56672">
    <property type="entry name" value="DNA/RNA polymerases"/>
    <property type="match status" value="1"/>
</dbReference>
<dbReference type="SUPFAM" id="SSF52540">
    <property type="entry name" value="P-loop containing nucleoside triphosphate hydrolases"/>
    <property type="match status" value="1"/>
</dbReference>
<dbReference type="SUPFAM" id="SSF88633">
    <property type="entry name" value="Positive stranded ssRNA viruses"/>
    <property type="match status" value="2"/>
</dbReference>
<dbReference type="SUPFAM" id="SSF50494">
    <property type="entry name" value="Trypsin-like serine proteases"/>
    <property type="match status" value="1"/>
</dbReference>
<dbReference type="PROSITE" id="PS51887">
    <property type="entry name" value="APHTHOVIRUS_LPRO"/>
    <property type="match status" value="1"/>
</dbReference>
<dbReference type="PROSITE" id="PS51874">
    <property type="entry name" value="PCV_3C_PRO"/>
    <property type="match status" value="1"/>
</dbReference>
<dbReference type="PROSITE" id="PS50507">
    <property type="entry name" value="RDRP_SSRNA_POS"/>
    <property type="match status" value="1"/>
</dbReference>
<dbReference type="PROSITE" id="PS51218">
    <property type="entry name" value="SF3_HELICASE_2"/>
    <property type="match status" value="1"/>
</dbReference>
<protein>
    <recommendedName>
        <fullName>Genome polyprotein</fullName>
    </recommendedName>
    <component>
        <recommendedName>
            <fullName>Leader protease</fullName>
            <shortName>Lpro</shortName>
            <ecNumber evidence="4">3.4.22.46</ecNumber>
        </recommendedName>
    </component>
    <component>
        <recommendedName>
            <fullName>Capsid protein VP0</fullName>
        </recommendedName>
        <alternativeName>
            <fullName>VP4-VP2</fullName>
        </alternativeName>
    </component>
    <component>
        <recommendedName>
            <fullName>Capsid protein VP4</fullName>
        </recommendedName>
        <alternativeName>
            <fullName>P1A</fullName>
        </alternativeName>
        <alternativeName>
            <fullName>Virion protein 4</fullName>
        </alternativeName>
    </component>
    <component>
        <recommendedName>
            <fullName>Capsid protein VP2</fullName>
        </recommendedName>
        <alternativeName>
            <fullName>P1B</fullName>
        </alternativeName>
        <alternativeName>
            <fullName>Virion protein 2</fullName>
        </alternativeName>
    </component>
    <component>
        <recommendedName>
            <fullName>Capsid protein VP3</fullName>
        </recommendedName>
        <alternativeName>
            <fullName>P1C</fullName>
        </alternativeName>
        <alternativeName>
            <fullName>Virion protein 3</fullName>
        </alternativeName>
    </component>
    <component>
        <recommendedName>
            <fullName>Capsid protein VP1</fullName>
        </recommendedName>
        <alternativeName>
            <fullName>P1D</fullName>
        </alternativeName>
        <alternativeName>
            <fullName>Virion protein 1</fullName>
        </alternativeName>
    </component>
    <component>
        <recommendedName>
            <fullName>Protein 2A</fullName>
            <shortName>P2A</shortName>
        </recommendedName>
        <alternativeName>
            <fullName>P52</fullName>
        </alternativeName>
    </component>
    <component>
        <recommendedName>
            <fullName>Protein 2B</fullName>
            <shortName>P2B</shortName>
        </recommendedName>
    </component>
    <component>
        <recommendedName>
            <fullName>Protein 2C</fullName>
            <shortName>P2C</shortName>
            <ecNumber evidence="4">3.6.1.15</ecNumber>
        </recommendedName>
    </component>
    <component>
        <recommendedName>
            <fullName>Protein 3A</fullName>
            <shortName>P3A</shortName>
        </recommendedName>
    </component>
    <component>
        <recommendedName>
            <fullName>Protein 3B-1</fullName>
            <shortName>P3B-1</shortName>
        </recommendedName>
        <alternativeName>
            <fullName>Genome-linked protein VPg1</fullName>
        </alternativeName>
    </component>
    <component>
        <recommendedName>
            <fullName>Protein 3B-2</fullName>
            <shortName>P3B-2</shortName>
        </recommendedName>
        <alternativeName>
            <fullName>Genome-linked protein VPg2</fullName>
        </alternativeName>
    </component>
    <component>
        <recommendedName>
            <fullName>Protein 3B-3</fullName>
            <shortName>P3B-3</shortName>
        </recommendedName>
        <alternativeName>
            <fullName>Genome-linked protein VPg3</fullName>
        </alternativeName>
    </component>
    <component>
        <recommendedName>
            <fullName>Protease 3C</fullName>
            <ecNumber>3.4.22.28</ecNumber>
        </recommendedName>
        <alternativeName>
            <fullName>Picornain 3C</fullName>
            <shortName>P3C</shortName>
        </alternativeName>
        <alternativeName>
            <fullName>Protease P20B</fullName>
        </alternativeName>
    </component>
    <component>
        <recommendedName>
            <fullName>RNA-directed RNA polymerase 3D-POL</fullName>
            <shortName>P3D-POL</shortName>
            <ecNumber evidence="4">2.7.7.48</ecNumber>
        </recommendedName>
        <alternativeName>
            <fullName>P56A</fullName>
        </alternativeName>
    </component>
</protein>
<reference key="1">
    <citation type="journal article" date="2005" name="J. Virol.">
        <title>Comparative genomics of foot-and-mouth disease virus.</title>
        <authorList>
            <person name="Carrillo C."/>
            <person name="Tulman E.R."/>
            <person name="Delhon G."/>
            <person name="Lu Z."/>
            <person name="Carreno A."/>
            <person name="Vagnozzi A."/>
            <person name="Kutish G.F."/>
            <person name="Rock D.L."/>
        </authorList>
    </citation>
    <scope>NUCLEOTIDE SEQUENCE [GENOMIC RNA]</scope>
</reference>
<reference key="2">
    <citation type="journal article" date="1983" name="Nucleic Acids Res.">
        <title>Structure of the FMDV translation initiation site and of the structural proteins.</title>
        <authorList>
            <person name="Beck E."/>
            <person name="Forss S."/>
            <person name="Strebel K."/>
            <person name="Cattaneo R."/>
            <person name="Feil G."/>
        </authorList>
    </citation>
    <scope>NUCLEOTIDE SEQUENCE [GENOMIC RNA] OF 1-1011</scope>
</reference>
<reference key="3">
    <citation type="journal article" date="1987" name="Nucleic Acids Res.">
        <title>All foot and mouth disease virus serotypes initiate protein synthesis at two separate AUGs.</title>
        <authorList>
            <person name="Sangar D.V."/>
            <person name="Newton S.E."/>
            <person name="Rowlands D.J."/>
            <person name="Clarke B.E."/>
        </authorList>
    </citation>
    <scope>ALTERNATIVE INITIATION</scope>
</reference>
<reference evidence="16" key="4">
    <citation type="journal article" date="1994" name="Structure">
        <title>The structure and antigenicity of a type C foot-and-mouth disease virus.</title>
        <authorList>
            <person name="Lea S."/>
            <person name="Hernandez J."/>
            <person name="Blakemore W."/>
            <person name="Brocchi E."/>
            <person name="Curry S."/>
            <person name="Domingo E."/>
            <person name="Fry E."/>
            <person name="Abu-Ghazaleh R."/>
            <person name="King A."/>
            <person name="Newman J."/>
        </authorList>
    </citation>
    <scope>X-RAY CRYSTALLOGRAPHY (3.50 ANGSTROMS) OF 287-504 AND 505-723</scope>
</reference>
<reference evidence="15" key="5">
    <citation type="journal article" date="2000" name="J. Gen. Virol.">
        <title>A multiply substituted G-H loop from foot-and-mouth disease virus in complex with a neutralizing antibody: a role for water molecules.</title>
        <authorList>
            <person name="Ochoa W.F."/>
            <person name="Kalko S.G."/>
            <person name="Mateu M.G."/>
            <person name="Gomes P."/>
            <person name="Andreu D."/>
            <person name="Domingo E."/>
            <person name="Fita I."/>
            <person name="Verdaguer N."/>
        </authorList>
    </citation>
    <scope>X-RAY CRYSTALLOGRAPHY (2.30 ANGSTROMS) OF 859-873</scope>
</reference>
<proteinExistence type="evidence at protein level"/>